<name>STM1_CANAL</name>
<protein>
    <recommendedName>
        <fullName evidence="5">Ribosome-associated protein STM1</fullName>
    </recommendedName>
    <alternativeName>
        <fullName>Ribosome clamping factor STM1</fullName>
    </alternativeName>
    <alternativeName>
        <fullName evidence="4">Ribosome-associated protein CAALFM_C304810CA</fullName>
    </alternativeName>
</protein>
<gene>
    <name type="primary">STM1</name>
    <name type="ordered locus">orf19.5943.1</name>
    <name type="ORF">CAALFM_C304810CA</name>
</gene>
<comment type="function">
    <text evidence="1">Ribosome preservation factor that protect a small pool of nontranslating, vacant ribosomes in cells under nutrient starvation conditions. Under nutrient-limiting conditions, cells reduce ribosome biogenesis and degrade ribosomes via autophagy (ribophagy) or proteasomal degradation. To avoid excessive degradation during starvation, STM1 binds to and protects 80S ribosomes from proteasomal degradation. Under nutrient-sufficient conditions, TORC1 phosphorylates and inhibits STM1 to prevent formation of dormant 80S ribosomes. Acts as an inhibitor of mRNA translation by promoting ribosome hibernation: clamps the two ribosomal subunits, thereby preventing their dissociation, and inhibits translation by excluding mRNA-binding. Acts via its association with eEF2, promoting ribosome stabilization and storage in an inactive state. May also repress translation by preventing association of eEF3 with ribosomes. Binds specifically G4 quadruplex (these are four-stranded right-handed helices, stabilized by guanine base quartets) and purine motif triplex (characterized by a third, antiparallel purine-rich DNA strand located within the major groove of a homopurine stretch of duplex DNA) nucleic acid structures. These structures may be present at telomeres or in rRNAs.</text>
</comment>
<comment type="subunit">
    <text evidence="1 6">Associates with mature 80S ribosomes. Binds to the head domain of the 40S ribosomal subunit and prevents mRNA binding by inserting its alpha-helix domain towards the mRNA entry tunnel at the decoding site, where it blocks the binding of tRNA and mRNA at the A- and P-sites (Probable). Interacts with eEF2; interaction sequesters eEF2 at the A-site of the ribosome, thereby blocking the interaction sites of the mRNA-tRNA complex, promoting ribosome stabilization and hibernation (By similarity).</text>
</comment>
<comment type="subcellular location">
    <subcellularLocation>
        <location evidence="6">Cytoplasm</location>
    </subcellularLocation>
</comment>
<comment type="PTM">
    <text evidence="1">Phosphorylation by TORC1 upon nutrient replenishment inhibits STM1 and causes its release from dormant ribosomes.</text>
</comment>
<comment type="similarity">
    <text evidence="5">Belongs to the STM1 family.</text>
</comment>
<sequence>MSFQNKNLYDLLGNDVEEDAAPSAPSREVVKKNTSSKKSDAAPASADPAKAKKKKSPTGNEAALKNKNFNKDVAPPQSTATKHSKKPFDRHSRTGKTDSKKKLQQGWGQSDKRELEGEVEGTEDAEAELEAEAEENDESANAIPKKSLQEYLAELELSKQELEGSKKLRQANEGAEQKWTAEEKIEKQQEVFFASTHTKKAKSKAQKEKVFLDIDANFGDEQPQTTRGGFRGGKRGGARGGSRGGAKRGGARGAAKPEVNDKNFPSL</sequence>
<keyword id="KW-0002">3D-structure</keyword>
<keyword id="KW-0175">Coiled coil</keyword>
<keyword id="KW-0963">Cytoplasm</keyword>
<keyword id="KW-1185">Reference proteome</keyword>
<dbReference type="EMBL" id="CP017625">
    <property type="protein sequence ID" value="AOW28498.1"/>
    <property type="molecule type" value="Genomic_DNA"/>
</dbReference>
<dbReference type="RefSeq" id="XP_019330868.1">
    <property type="nucleotide sequence ID" value="XM_019475323.1"/>
</dbReference>
<dbReference type="PDB" id="7PZY">
    <property type="method" value="EM"/>
    <property type="resolution" value="2.32 A"/>
    <property type="chains" value="i=1-267"/>
</dbReference>
<dbReference type="PDB" id="7Q08">
    <property type="method" value="EM"/>
    <property type="resolution" value="2.56 A"/>
    <property type="chains" value="i=1-267"/>
</dbReference>
<dbReference type="PDB" id="7Q0F">
    <property type="method" value="EM"/>
    <property type="resolution" value="2.64 A"/>
    <property type="chains" value="i=1-267"/>
</dbReference>
<dbReference type="PDB" id="7Q0P">
    <property type="method" value="EM"/>
    <property type="resolution" value="2.77 A"/>
    <property type="chains" value="i=1-267"/>
</dbReference>
<dbReference type="PDB" id="7Q0R">
    <property type="method" value="EM"/>
    <property type="resolution" value="2.67 A"/>
    <property type="chains" value="i=1-267"/>
</dbReference>
<dbReference type="PDB" id="8C3A">
    <property type="method" value="X-ray"/>
    <property type="resolution" value="3.00 A"/>
    <property type="chains" value="CL/i=1-267"/>
</dbReference>
<dbReference type="PDB" id="8CQ7">
    <property type="method" value="X-ray"/>
    <property type="resolution" value="3.20 A"/>
    <property type="chains" value="CL/i=1-267"/>
</dbReference>
<dbReference type="PDB" id="8CQW">
    <property type="method" value="X-ray"/>
    <property type="resolution" value="3.05 A"/>
    <property type="chains" value="CL/i=1-267"/>
</dbReference>
<dbReference type="PDB" id="8CRE">
    <property type="method" value="X-ray"/>
    <property type="resolution" value="3.00 A"/>
    <property type="chains" value="CL/i=1-267"/>
</dbReference>
<dbReference type="PDB" id="8OEQ">
    <property type="method" value="X-ray"/>
    <property type="resolution" value="3.30 A"/>
    <property type="chains" value="CL/i=1-267"/>
</dbReference>
<dbReference type="PDB" id="8OH6">
    <property type="method" value="X-ray"/>
    <property type="resolution" value="3.35 A"/>
    <property type="chains" value="CL/i=1-267"/>
</dbReference>
<dbReference type="PDB" id="8OI5">
    <property type="method" value="X-ray"/>
    <property type="resolution" value="2.90 A"/>
    <property type="chains" value="CL/i=1-267"/>
</dbReference>
<dbReference type="PDB" id="8OJ3">
    <property type="method" value="X-ray"/>
    <property type="resolution" value="3.50 A"/>
    <property type="chains" value="CL/i=1-267"/>
</dbReference>
<dbReference type="PDBsum" id="7PZY"/>
<dbReference type="PDBsum" id="7Q08"/>
<dbReference type="PDBsum" id="7Q0F"/>
<dbReference type="PDBsum" id="7Q0P"/>
<dbReference type="PDBsum" id="7Q0R"/>
<dbReference type="PDBsum" id="8C3A"/>
<dbReference type="PDBsum" id="8CQ7"/>
<dbReference type="PDBsum" id="8CQW"/>
<dbReference type="PDBsum" id="8CRE"/>
<dbReference type="PDBsum" id="8OEQ"/>
<dbReference type="PDBsum" id="8OH6"/>
<dbReference type="PDBsum" id="8OI5"/>
<dbReference type="PDBsum" id="8OJ3"/>
<dbReference type="EMDB" id="EMD-13737"/>
<dbReference type="EMDB" id="EMD-13741"/>
<dbReference type="EMDB" id="EMD-13744"/>
<dbReference type="EMDB" id="EMD-13749"/>
<dbReference type="EMDB" id="EMD-13750"/>
<dbReference type="SMR" id="A0A1D8PK71"/>
<dbReference type="FunCoup" id="A0A1D8PK71">
    <property type="interactions" value="352"/>
</dbReference>
<dbReference type="STRING" id="237561.A0A1D8PK71"/>
<dbReference type="EnsemblFungi" id="C3_04810C_A-T">
    <property type="protein sequence ID" value="C3_04810C_A-T-p1"/>
    <property type="gene ID" value="C3_04810C_A"/>
</dbReference>
<dbReference type="GeneID" id="30515205"/>
<dbReference type="KEGG" id="cal:CAALFM_C304810CA"/>
<dbReference type="CGD" id="CAL0000197338">
    <property type="gene designation" value="orf19.5943.1"/>
</dbReference>
<dbReference type="VEuPathDB" id="FungiDB:C3_04810C_A"/>
<dbReference type="eggNOG" id="ENOG502S4DF">
    <property type="taxonomic scope" value="Eukaryota"/>
</dbReference>
<dbReference type="OMA" id="KKWAGAK"/>
<dbReference type="OrthoDB" id="5426471at2759"/>
<dbReference type="Proteomes" id="UP000000559">
    <property type="component" value="Chromosome 3"/>
</dbReference>
<dbReference type="GO" id="GO:0005737">
    <property type="term" value="C:cytoplasm"/>
    <property type="evidence" value="ECO:0000318"/>
    <property type="project" value="GO_Central"/>
</dbReference>
<dbReference type="GO" id="GO:0005634">
    <property type="term" value="C:nucleus"/>
    <property type="evidence" value="ECO:0000318"/>
    <property type="project" value="GO_Central"/>
</dbReference>
<dbReference type="GO" id="GO:0043022">
    <property type="term" value="F:ribosome binding"/>
    <property type="evidence" value="ECO:0007669"/>
    <property type="project" value="EnsemblFungi"/>
</dbReference>
<dbReference type="GO" id="GO:0003723">
    <property type="term" value="F:RNA binding"/>
    <property type="evidence" value="ECO:0000318"/>
    <property type="project" value="GO_Central"/>
</dbReference>
<dbReference type="GO" id="GO:0042162">
    <property type="term" value="F:telomeric DNA binding"/>
    <property type="evidence" value="ECO:0007669"/>
    <property type="project" value="EnsemblFungi"/>
</dbReference>
<dbReference type="GO" id="GO:0061770">
    <property type="term" value="F:translation elongation factor binding"/>
    <property type="evidence" value="ECO:0007669"/>
    <property type="project" value="EnsemblFungi"/>
</dbReference>
<dbReference type="GO" id="GO:0030371">
    <property type="term" value="F:translation repressor activity"/>
    <property type="evidence" value="ECO:0007669"/>
    <property type="project" value="EnsemblFungi"/>
</dbReference>
<dbReference type="GO" id="GO:0045142">
    <property type="term" value="F:triplex DNA binding"/>
    <property type="evidence" value="ECO:0007669"/>
    <property type="project" value="EnsemblFungi"/>
</dbReference>
<dbReference type="GO" id="GO:0043066">
    <property type="term" value="P:negative regulation of apoptotic process"/>
    <property type="evidence" value="ECO:0007669"/>
    <property type="project" value="EnsemblFungi"/>
</dbReference>
<dbReference type="GO" id="GO:0043558">
    <property type="term" value="P:regulation of translational initiation in response to stress"/>
    <property type="evidence" value="ECO:0007669"/>
    <property type="project" value="EnsemblFungi"/>
</dbReference>
<dbReference type="GO" id="GO:0141014">
    <property type="term" value="P:ribosome hibernation"/>
    <property type="evidence" value="ECO:0007669"/>
    <property type="project" value="EnsemblFungi"/>
</dbReference>
<dbReference type="GO" id="GO:0000723">
    <property type="term" value="P:telomere maintenance"/>
    <property type="evidence" value="ECO:0007669"/>
    <property type="project" value="EnsemblFungi"/>
</dbReference>
<dbReference type="GO" id="GO:0031929">
    <property type="term" value="P:TOR signaling"/>
    <property type="evidence" value="ECO:0007669"/>
    <property type="project" value="EnsemblFungi"/>
</dbReference>
<dbReference type="GO" id="GO:0006414">
    <property type="term" value="P:translational elongation"/>
    <property type="evidence" value="ECO:0007669"/>
    <property type="project" value="EnsemblFungi"/>
</dbReference>
<dbReference type="Gene3D" id="6.10.140.1040">
    <property type="match status" value="1"/>
</dbReference>
<dbReference type="InterPro" id="IPR039764">
    <property type="entry name" value="HABP4/SERBP1-like"/>
</dbReference>
<dbReference type="InterPro" id="IPR006861">
    <property type="entry name" value="HABP4_PAIRBP1-bd"/>
</dbReference>
<dbReference type="InterPro" id="IPR019084">
    <property type="entry name" value="STM1-like_N"/>
</dbReference>
<dbReference type="PANTHER" id="PTHR12299:SF17">
    <property type="entry name" value="AT19571P-RELATED"/>
    <property type="match status" value="1"/>
</dbReference>
<dbReference type="PANTHER" id="PTHR12299">
    <property type="entry name" value="HYALURONIC ACID-BINDING PROTEIN 4"/>
    <property type="match status" value="1"/>
</dbReference>
<dbReference type="Pfam" id="PF09598">
    <property type="entry name" value="Stm1_N"/>
    <property type="match status" value="1"/>
</dbReference>
<dbReference type="SMART" id="SM01233">
    <property type="entry name" value="HABP4_PAI-RBP1"/>
    <property type="match status" value="1"/>
</dbReference>
<organism>
    <name type="scientific">Candida albicans (strain SC5314 / ATCC MYA-2876)</name>
    <name type="common">Yeast</name>
    <dbReference type="NCBI Taxonomy" id="237561"/>
    <lineage>
        <taxon>Eukaryota</taxon>
        <taxon>Fungi</taxon>
        <taxon>Dikarya</taxon>
        <taxon>Ascomycota</taxon>
        <taxon>Saccharomycotina</taxon>
        <taxon>Pichiomycetes</taxon>
        <taxon>Debaryomycetaceae</taxon>
        <taxon>Candida/Lodderomyces clade</taxon>
        <taxon>Candida</taxon>
    </lineage>
</organism>
<accession>A0A1D8PK71</accession>
<reference key="1">
    <citation type="journal article" date="2004" name="Proc. Natl. Acad. Sci. U.S.A.">
        <title>The diploid genome sequence of Candida albicans.</title>
        <authorList>
            <person name="Jones T."/>
            <person name="Federspiel N.A."/>
            <person name="Chibana H."/>
            <person name="Dungan J."/>
            <person name="Kalman S."/>
            <person name="Magee B.B."/>
            <person name="Newport G."/>
            <person name="Thorstenson Y.R."/>
            <person name="Agabian N."/>
            <person name="Magee P.T."/>
            <person name="Davis R.W."/>
            <person name="Scherer S."/>
        </authorList>
    </citation>
    <scope>NUCLEOTIDE SEQUENCE [LARGE SCALE GENOMIC DNA]</scope>
    <source>
        <strain>SC5314 / ATCC MYA-2876</strain>
    </source>
</reference>
<reference key="2">
    <citation type="journal article" date="2007" name="Genome Biol.">
        <title>Assembly of the Candida albicans genome into sixteen supercontigs aligned on the eight chromosomes.</title>
        <authorList>
            <person name="van het Hoog M."/>
            <person name="Rast T.J."/>
            <person name="Martchenko M."/>
            <person name="Grindle S."/>
            <person name="Dignard D."/>
            <person name="Hogues H."/>
            <person name="Cuomo C."/>
            <person name="Berriman M."/>
            <person name="Scherer S."/>
            <person name="Magee B.B."/>
            <person name="Whiteway M."/>
            <person name="Chibana H."/>
            <person name="Nantel A."/>
            <person name="Magee P.T."/>
        </authorList>
    </citation>
    <scope>GENOME REANNOTATION</scope>
    <source>
        <strain>SC5314 / ATCC MYA-2876</strain>
    </source>
</reference>
<reference key="3">
    <citation type="journal article" date="2013" name="Genome Biol.">
        <title>Assembly of a phased diploid Candida albicans genome facilitates allele-specific measurements and provides a simple model for repeat and indel structure.</title>
        <authorList>
            <person name="Muzzey D."/>
            <person name="Schwartz K."/>
            <person name="Weissman J.S."/>
            <person name="Sherlock G."/>
        </authorList>
    </citation>
    <scope>NUCLEOTIDE SEQUENCE [LARGE SCALE GENOMIC DNA]</scope>
    <scope>GENOME REANNOTATION</scope>
    <source>
        <strain>SC5314 / ATCC MYA-2876</strain>
    </source>
</reference>
<reference evidence="7 8 9" key="4">
    <citation type="journal article" date="2022" name="Sci. Adv.">
        <title>E-site drug specificity of the human pathogen Candida albicans ribosome.</title>
        <authorList>
            <person name="Zgadzay Y."/>
            <person name="Kolosova O."/>
            <person name="Stetsenko A."/>
            <person name="Wu C."/>
            <person name="Bruchlen D."/>
            <person name="Usachev K."/>
            <person name="Validov S."/>
            <person name="Jenner L."/>
            <person name="Rogachev A."/>
            <person name="Yusupova G."/>
            <person name="Sachs M.S."/>
            <person name="Guskov A."/>
            <person name="Yusupov M."/>
        </authorList>
    </citation>
    <scope>STRUCTURE BY ELECTRON MICROSCOPY (2.32 ANGSTROMS) OF THE 80S RIBOSOME</scope>
    <scope>SUBUNIT</scope>
</reference>
<evidence type="ECO:0000250" key="1">
    <source>
        <dbReference type="UniProtKB" id="P39015"/>
    </source>
</evidence>
<evidence type="ECO:0000255" key="2"/>
<evidence type="ECO:0000256" key="3">
    <source>
        <dbReference type="SAM" id="MobiDB-lite"/>
    </source>
</evidence>
<evidence type="ECO:0000303" key="4">
    <source>
    </source>
</evidence>
<evidence type="ECO:0000305" key="5"/>
<evidence type="ECO:0000305" key="6">
    <source>
    </source>
</evidence>
<evidence type="ECO:0007744" key="7">
    <source>
        <dbReference type="PDB" id="7PZY"/>
    </source>
</evidence>
<evidence type="ECO:0007744" key="8">
    <source>
        <dbReference type="PDB" id="7Q0F"/>
    </source>
</evidence>
<evidence type="ECO:0007744" key="9">
    <source>
        <dbReference type="PDB" id="7Q0P"/>
    </source>
</evidence>
<feature type="chain" id="PRO_0000456524" description="Ribosome-associated protein STM1">
    <location>
        <begin position="1"/>
        <end position="267"/>
    </location>
</feature>
<feature type="region of interest" description="Disordered" evidence="3">
    <location>
        <begin position="1"/>
        <end position="145"/>
    </location>
</feature>
<feature type="region of interest" description="Disordered" evidence="3">
    <location>
        <begin position="161"/>
        <end position="182"/>
    </location>
</feature>
<feature type="region of interest" description="Disordered" evidence="3">
    <location>
        <begin position="216"/>
        <end position="267"/>
    </location>
</feature>
<feature type="coiled-coil region" evidence="2">
    <location>
        <begin position="112"/>
        <end position="168"/>
    </location>
</feature>
<feature type="compositionally biased region" description="Basic and acidic residues" evidence="3">
    <location>
        <begin position="86"/>
        <end position="101"/>
    </location>
</feature>
<feature type="compositionally biased region" description="Acidic residues" evidence="3">
    <location>
        <begin position="117"/>
        <end position="138"/>
    </location>
</feature>
<proteinExistence type="evidence at protein level"/>